<feature type="chain" id="PRO_0000109579" description="Protein translocase subunit SecA">
    <location>
        <begin position="1"/>
        <end position="874"/>
    </location>
</feature>
<feature type="binding site" evidence="1">
    <location>
        <position position="87"/>
    </location>
    <ligand>
        <name>ATP</name>
        <dbReference type="ChEBI" id="CHEBI:30616"/>
    </ligand>
</feature>
<feature type="binding site" evidence="1">
    <location>
        <begin position="105"/>
        <end position="109"/>
    </location>
    <ligand>
        <name>ATP</name>
        <dbReference type="ChEBI" id="CHEBI:30616"/>
    </ligand>
</feature>
<feature type="binding site" evidence="1">
    <location>
        <position position="512"/>
    </location>
    <ligand>
        <name>ATP</name>
        <dbReference type="ChEBI" id="CHEBI:30616"/>
    </ligand>
</feature>
<feature type="binding site" evidence="1">
    <location>
        <position position="859"/>
    </location>
    <ligand>
        <name>Zn(2+)</name>
        <dbReference type="ChEBI" id="CHEBI:29105"/>
    </ligand>
</feature>
<feature type="binding site" evidence="1">
    <location>
        <position position="861"/>
    </location>
    <ligand>
        <name>Zn(2+)</name>
        <dbReference type="ChEBI" id="CHEBI:29105"/>
    </ligand>
</feature>
<feature type="binding site" evidence="1">
    <location>
        <position position="870"/>
    </location>
    <ligand>
        <name>Zn(2+)</name>
        <dbReference type="ChEBI" id="CHEBI:29105"/>
    </ligand>
</feature>
<feature type="binding site" evidence="1">
    <location>
        <position position="871"/>
    </location>
    <ligand>
        <name>Zn(2+)</name>
        <dbReference type="ChEBI" id="CHEBI:29105"/>
    </ligand>
</feature>
<sequence length="874" mass="101164">MFIKFLHKIFSNRNDRILKKFKKIVSSINQLEEKFKKLSDKKLQENTGIFRLRLKKGECLDDLLPESFATVREASRRVFNMRHFDVQILGGIVLNKQCIAEMRTGEGKTLTSTLPAYLNALTGRGVHIVTMNDYLAERDAKNNTPLFEFLGLTVGLNLPEMSFIDKKKAYLCDITYGTNNEYGFDYLRDNMIFSAEERVQRELNYALIDEVDSILIDEARTPLIISGPSEDSSFLYKEINKLVPSLICQKKEDSDKFHGNGHFSIDEKSKQIYLTERGLVEVEKILLDRKLMKKEESLYSSNNIILMHHVISALRAHNLFTRNIDYLVKDNNIIIVDEHTGRTMPGRRWSDGLHQAIEAKENVTVRNENQTLASITFQNYFRLYKKIAGMTGTAATESFEFSSIYNLDTVIIPPNKPMIRKDLSDLVYMTEEEKINAILKDIKNCIKKNQPVLVGTISIEKSEMISKKLKILNIKHNVLNAKFHAREAEIIAQAGKPKSVTIATNMAGRGTDIVLGGSLESQLEKNMYLDKIETIKRNWKKQHDLVVLSGGLHIIGTERHESRRIDNQLRGRSGRQGDSGSSRFYLSMEDSLMRIFASDKIISMMRKLGLSLNEAIEHPWVTKAIENAQKKVENRNFDIRKQLLEYDDVCNEQRRVIYAQRNKLIDSENIQQNIYDILKDVLHSIIKTHLNFDFPKNTRNILDLENKLSIEFNLNISIKDWLKKDHDIKKENIIKKIIDIAKKNYLNKEIQIGFHNIRMIEKSIMLKTLDSLWKEHLSAMDYLRQGIHLRGYAQKDPKQEYKRESFNMFSNMLELLKYEVISFLSKLDISYIKSNLHLNMNNNSSIVNNDIKMGRNTPCFCKSGKKYKYCHGSL</sequence>
<keyword id="KW-0067">ATP-binding</keyword>
<keyword id="KW-0997">Cell inner membrane</keyword>
<keyword id="KW-1003">Cell membrane</keyword>
<keyword id="KW-0963">Cytoplasm</keyword>
<keyword id="KW-0472">Membrane</keyword>
<keyword id="KW-0479">Metal-binding</keyword>
<keyword id="KW-0547">Nucleotide-binding</keyword>
<keyword id="KW-0653">Protein transport</keyword>
<keyword id="KW-1278">Translocase</keyword>
<keyword id="KW-0811">Translocation</keyword>
<keyword id="KW-0813">Transport</keyword>
<keyword id="KW-0862">Zinc</keyword>
<proteinExistence type="inferred from homology"/>
<dbReference type="EC" id="7.4.2.8" evidence="1"/>
<dbReference type="EMBL" id="AE013218">
    <property type="protein sequence ID" value="AAM67759.1"/>
    <property type="molecule type" value="Genomic_DNA"/>
</dbReference>
<dbReference type="RefSeq" id="WP_011053726.1">
    <property type="nucleotide sequence ID" value="NC_004061.1"/>
</dbReference>
<dbReference type="SMR" id="Q8K9U3"/>
<dbReference type="STRING" id="198804.BUsg_195"/>
<dbReference type="GeneID" id="93003662"/>
<dbReference type="KEGG" id="bas:BUsg_195"/>
<dbReference type="eggNOG" id="COG0653">
    <property type="taxonomic scope" value="Bacteria"/>
</dbReference>
<dbReference type="HOGENOM" id="CLU_005314_3_0_6"/>
<dbReference type="Proteomes" id="UP000000416">
    <property type="component" value="Chromosome"/>
</dbReference>
<dbReference type="GO" id="GO:0031522">
    <property type="term" value="C:cell envelope Sec protein transport complex"/>
    <property type="evidence" value="ECO:0007669"/>
    <property type="project" value="TreeGrafter"/>
</dbReference>
<dbReference type="GO" id="GO:0005829">
    <property type="term" value="C:cytosol"/>
    <property type="evidence" value="ECO:0007669"/>
    <property type="project" value="TreeGrafter"/>
</dbReference>
<dbReference type="GO" id="GO:0005886">
    <property type="term" value="C:plasma membrane"/>
    <property type="evidence" value="ECO:0007669"/>
    <property type="project" value="UniProtKB-SubCell"/>
</dbReference>
<dbReference type="GO" id="GO:0005524">
    <property type="term" value="F:ATP binding"/>
    <property type="evidence" value="ECO:0007669"/>
    <property type="project" value="UniProtKB-UniRule"/>
</dbReference>
<dbReference type="GO" id="GO:0046872">
    <property type="term" value="F:metal ion binding"/>
    <property type="evidence" value="ECO:0007669"/>
    <property type="project" value="UniProtKB-KW"/>
</dbReference>
<dbReference type="GO" id="GO:0008564">
    <property type="term" value="F:protein-exporting ATPase activity"/>
    <property type="evidence" value="ECO:0007669"/>
    <property type="project" value="UniProtKB-EC"/>
</dbReference>
<dbReference type="GO" id="GO:0065002">
    <property type="term" value="P:intracellular protein transmembrane transport"/>
    <property type="evidence" value="ECO:0007669"/>
    <property type="project" value="UniProtKB-UniRule"/>
</dbReference>
<dbReference type="GO" id="GO:0017038">
    <property type="term" value="P:protein import"/>
    <property type="evidence" value="ECO:0007669"/>
    <property type="project" value="InterPro"/>
</dbReference>
<dbReference type="GO" id="GO:0006605">
    <property type="term" value="P:protein targeting"/>
    <property type="evidence" value="ECO:0007669"/>
    <property type="project" value="UniProtKB-UniRule"/>
</dbReference>
<dbReference type="GO" id="GO:0043952">
    <property type="term" value="P:protein transport by the Sec complex"/>
    <property type="evidence" value="ECO:0007669"/>
    <property type="project" value="TreeGrafter"/>
</dbReference>
<dbReference type="CDD" id="cd17928">
    <property type="entry name" value="DEXDc_SecA"/>
    <property type="match status" value="1"/>
</dbReference>
<dbReference type="CDD" id="cd18803">
    <property type="entry name" value="SF2_C_secA"/>
    <property type="match status" value="1"/>
</dbReference>
<dbReference type="FunFam" id="3.40.50.300:FF:000113">
    <property type="entry name" value="Preprotein translocase subunit SecA"/>
    <property type="match status" value="1"/>
</dbReference>
<dbReference type="FunFam" id="3.90.1440.10:FF:000001">
    <property type="entry name" value="Preprotein translocase subunit SecA"/>
    <property type="match status" value="1"/>
</dbReference>
<dbReference type="FunFam" id="1.10.3060.10:FF:000003">
    <property type="entry name" value="Protein translocase subunit SecA"/>
    <property type="match status" value="1"/>
</dbReference>
<dbReference type="Gene3D" id="3.10.450.50">
    <property type="match status" value="1"/>
</dbReference>
<dbReference type="Gene3D" id="1.10.3060.10">
    <property type="entry name" value="Helical scaffold and wing domains of SecA"/>
    <property type="match status" value="1"/>
</dbReference>
<dbReference type="Gene3D" id="3.40.50.300">
    <property type="entry name" value="P-loop containing nucleotide triphosphate hydrolases"/>
    <property type="match status" value="2"/>
</dbReference>
<dbReference type="Gene3D" id="3.90.1440.10">
    <property type="entry name" value="SecA, preprotein cross-linking domain"/>
    <property type="match status" value="1"/>
</dbReference>
<dbReference type="HAMAP" id="MF_01382">
    <property type="entry name" value="SecA"/>
    <property type="match status" value="1"/>
</dbReference>
<dbReference type="InterPro" id="IPR014001">
    <property type="entry name" value="Helicase_ATP-bd"/>
</dbReference>
<dbReference type="InterPro" id="IPR001650">
    <property type="entry name" value="Helicase_C-like"/>
</dbReference>
<dbReference type="InterPro" id="IPR027417">
    <property type="entry name" value="P-loop_NTPase"/>
</dbReference>
<dbReference type="InterPro" id="IPR004027">
    <property type="entry name" value="SEC_C_motif"/>
</dbReference>
<dbReference type="InterPro" id="IPR000185">
    <property type="entry name" value="SecA"/>
</dbReference>
<dbReference type="InterPro" id="IPR020937">
    <property type="entry name" value="SecA_CS"/>
</dbReference>
<dbReference type="InterPro" id="IPR011115">
    <property type="entry name" value="SecA_DEAD"/>
</dbReference>
<dbReference type="InterPro" id="IPR014018">
    <property type="entry name" value="SecA_motor_DEAD"/>
</dbReference>
<dbReference type="InterPro" id="IPR011130">
    <property type="entry name" value="SecA_preprotein_X-link_dom"/>
</dbReference>
<dbReference type="InterPro" id="IPR044722">
    <property type="entry name" value="SecA_SF2_C"/>
</dbReference>
<dbReference type="InterPro" id="IPR011116">
    <property type="entry name" value="SecA_Wing/Scaffold"/>
</dbReference>
<dbReference type="InterPro" id="IPR036266">
    <property type="entry name" value="SecA_Wing/Scaffold_sf"/>
</dbReference>
<dbReference type="InterPro" id="IPR036670">
    <property type="entry name" value="SecA_X-link_sf"/>
</dbReference>
<dbReference type="NCBIfam" id="NF009538">
    <property type="entry name" value="PRK12904.1"/>
    <property type="match status" value="1"/>
</dbReference>
<dbReference type="NCBIfam" id="TIGR00963">
    <property type="entry name" value="secA"/>
    <property type="match status" value="1"/>
</dbReference>
<dbReference type="PANTHER" id="PTHR30612:SF0">
    <property type="entry name" value="CHLOROPLAST PROTEIN-TRANSPORTING ATPASE"/>
    <property type="match status" value="1"/>
</dbReference>
<dbReference type="PANTHER" id="PTHR30612">
    <property type="entry name" value="SECA INNER MEMBRANE COMPONENT OF SEC PROTEIN SECRETION SYSTEM"/>
    <property type="match status" value="1"/>
</dbReference>
<dbReference type="Pfam" id="PF21090">
    <property type="entry name" value="P-loop_SecA"/>
    <property type="match status" value="1"/>
</dbReference>
<dbReference type="Pfam" id="PF02810">
    <property type="entry name" value="SEC-C"/>
    <property type="match status" value="1"/>
</dbReference>
<dbReference type="Pfam" id="PF07517">
    <property type="entry name" value="SecA_DEAD"/>
    <property type="match status" value="1"/>
</dbReference>
<dbReference type="Pfam" id="PF01043">
    <property type="entry name" value="SecA_PP_bind"/>
    <property type="match status" value="1"/>
</dbReference>
<dbReference type="Pfam" id="PF07516">
    <property type="entry name" value="SecA_SW"/>
    <property type="match status" value="1"/>
</dbReference>
<dbReference type="PRINTS" id="PR00906">
    <property type="entry name" value="SECA"/>
</dbReference>
<dbReference type="SMART" id="SM00957">
    <property type="entry name" value="SecA_DEAD"/>
    <property type="match status" value="1"/>
</dbReference>
<dbReference type="SMART" id="SM00958">
    <property type="entry name" value="SecA_PP_bind"/>
    <property type="match status" value="1"/>
</dbReference>
<dbReference type="SUPFAM" id="SSF81886">
    <property type="entry name" value="Helical scaffold and wing domains of SecA"/>
    <property type="match status" value="1"/>
</dbReference>
<dbReference type="SUPFAM" id="SSF52540">
    <property type="entry name" value="P-loop containing nucleoside triphosphate hydrolases"/>
    <property type="match status" value="2"/>
</dbReference>
<dbReference type="SUPFAM" id="SSF81767">
    <property type="entry name" value="Pre-protein crosslinking domain of SecA"/>
    <property type="match status" value="1"/>
</dbReference>
<dbReference type="PROSITE" id="PS01312">
    <property type="entry name" value="SECA"/>
    <property type="match status" value="1"/>
</dbReference>
<dbReference type="PROSITE" id="PS51196">
    <property type="entry name" value="SECA_MOTOR_DEAD"/>
    <property type="match status" value="1"/>
</dbReference>
<accession>Q8K9U3</accession>
<gene>
    <name evidence="1" type="primary">secA</name>
    <name type="ordered locus">BUsg_195</name>
</gene>
<protein>
    <recommendedName>
        <fullName evidence="1">Protein translocase subunit SecA</fullName>
        <ecNumber evidence="1">7.4.2.8</ecNumber>
    </recommendedName>
</protein>
<name>SECA_BUCAP</name>
<organism>
    <name type="scientific">Buchnera aphidicola subsp. Schizaphis graminum (strain Sg)</name>
    <dbReference type="NCBI Taxonomy" id="198804"/>
    <lineage>
        <taxon>Bacteria</taxon>
        <taxon>Pseudomonadati</taxon>
        <taxon>Pseudomonadota</taxon>
        <taxon>Gammaproteobacteria</taxon>
        <taxon>Enterobacterales</taxon>
        <taxon>Erwiniaceae</taxon>
        <taxon>Buchnera</taxon>
    </lineage>
</organism>
<reference key="1">
    <citation type="journal article" date="2002" name="Science">
        <title>50 million years of genomic stasis in endosymbiotic bacteria.</title>
        <authorList>
            <person name="Tamas I."/>
            <person name="Klasson L."/>
            <person name="Canbaeck B."/>
            <person name="Naeslund A.K."/>
            <person name="Eriksson A.-S."/>
            <person name="Wernegreen J.J."/>
            <person name="Sandstroem J.P."/>
            <person name="Moran N.A."/>
            <person name="Andersson S.G.E."/>
        </authorList>
    </citation>
    <scope>NUCLEOTIDE SEQUENCE [LARGE SCALE GENOMIC DNA]</scope>
    <source>
        <strain>Sg</strain>
    </source>
</reference>
<evidence type="ECO:0000255" key="1">
    <source>
        <dbReference type="HAMAP-Rule" id="MF_01382"/>
    </source>
</evidence>
<comment type="function">
    <text evidence="1">Part of the Sec protein translocase complex. Interacts with the SecYEG preprotein conducting channel. Has a central role in coupling the hydrolysis of ATP to the transfer of proteins into and across the cell membrane, serving both as a receptor for the preprotein-SecB complex and as an ATP-driven molecular motor driving the stepwise translocation of polypeptide chains across the membrane.</text>
</comment>
<comment type="catalytic activity">
    <reaction evidence="1">
        <text>ATP + H2O + cellular proteinSide 1 = ADP + phosphate + cellular proteinSide 2.</text>
        <dbReference type="EC" id="7.4.2.8"/>
    </reaction>
</comment>
<comment type="cofactor">
    <cofactor evidence="1">
        <name>Zn(2+)</name>
        <dbReference type="ChEBI" id="CHEBI:29105"/>
    </cofactor>
    <text evidence="1">May bind 1 zinc ion per subunit.</text>
</comment>
<comment type="subunit">
    <text evidence="1">Monomer and homodimer. Part of the essential Sec protein translocation apparatus which comprises SecA, SecYEG and auxiliary proteins SecDF-YajC and YidC.</text>
</comment>
<comment type="subcellular location">
    <subcellularLocation>
        <location evidence="1">Cell inner membrane</location>
        <topology evidence="1">Peripheral membrane protein</topology>
        <orientation evidence="1">Cytoplasmic side</orientation>
    </subcellularLocation>
    <subcellularLocation>
        <location evidence="1">Cytoplasm</location>
    </subcellularLocation>
    <text evidence="1">Distribution is 50-50.</text>
</comment>
<comment type="similarity">
    <text evidence="1">Belongs to the SecA family.</text>
</comment>